<accession>Q54R95</accession>
<protein>
    <recommendedName>
        <fullName>Probable serine/threonine-protein kinase DDB_G0283337</fullName>
        <ecNumber>2.7.11.1</ecNumber>
    </recommendedName>
</protein>
<reference key="1">
    <citation type="journal article" date="2005" name="Nature">
        <title>The genome of the social amoeba Dictyostelium discoideum.</title>
        <authorList>
            <person name="Eichinger L."/>
            <person name="Pachebat J.A."/>
            <person name="Gloeckner G."/>
            <person name="Rajandream M.A."/>
            <person name="Sucgang R."/>
            <person name="Berriman M."/>
            <person name="Song J."/>
            <person name="Olsen R."/>
            <person name="Szafranski K."/>
            <person name="Xu Q."/>
            <person name="Tunggal B."/>
            <person name="Kummerfeld S."/>
            <person name="Madera M."/>
            <person name="Konfortov B.A."/>
            <person name="Rivero F."/>
            <person name="Bankier A.T."/>
            <person name="Lehmann R."/>
            <person name="Hamlin N."/>
            <person name="Davies R."/>
            <person name="Gaudet P."/>
            <person name="Fey P."/>
            <person name="Pilcher K."/>
            <person name="Chen G."/>
            <person name="Saunders D."/>
            <person name="Sodergren E.J."/>
            <person name="Davis P."/>
            <person name="Kerhornou A."/>
            <person name="Nie X."/>
            <person name="Hall N."/>
            <person name="Anjard C."/>
            <person name="Hemphill L."/>
            <person name="Bason N."/>
            <person name="Farbrother P."/>
            <person name="Desany B."/>
            <person name="Just E."/>
            <person name="Morio T."/>
            <person name="Rost R."/>
            <person name="Churcher C.M."/>
            <person name="Cooper J."/>
            <person name="Haydock S."/>
            <person name="van Driessche N."/>
            <person name="Cronin A."/>
            <person name="Goodhead I."/>
            <person name="Muzny D.M."/>
            <person name="Mourier T."/>
            <person name="Pain A."/>
            <person name="Lu M."/>
            <person name="Harper D."/>
            <person name="Lindsay R."/>
            <person name="Hauser H."/>
            <person name="James K.D."/>
            <person name="Quiles M."/>
            <person name="Madan Babu M."/>
            <person name="Saito T."/>
            <person name="Buchrieser C."/>
            <person name="Wardroper A."/>
            <person name="Felder M."/>
            <person name="Thangavelu M."/>
            <person name="Johnson D."/>
            <person name="Knights A."/>
            <person name="Loulseged H."/>
            <person name="Mungall K.L."/>
            <person name="Oliver K."/>
            <person name="Price C."/>
            <person name="Quail M.A."/>
            <person name="Urushihara H."/>
            <person name="Hernandez J."/>
            <person name="Rabbinowitsch E."/>
            <person name="Steffen D."/>
            <person name="Sanders M."/>
            <person name="Ma J."/>
            <person name="Kohara Y."/>
            <person name="Sharp S."/>
            <person name="Simmonds M.N."/>
            <person name="Spiegler S."/>
            <person name="Tivey A."/>
            <person name="Sugano S."/>
            <person name="White B."/>
            <person name="Walker D."/>
            <person name="Woodward J.R."/>
            <person name="Winckler T."/>
            <person name="Tanaka Y."/>
            <person name="Shaulsky G."/>
            <person name="Schleicher M."/>
            <person name="Weinstock G.M."/>
            <person name="Rosenthal A."/>
            <person name="Cox E.C."/>
            <person name="Chisholm R.L."/>
            <person name="Gibbs R.A."/>
            <person name="Loomis W.F."/>
            <person name="Platzer M."/>
            <person name="Kay R.R."/>
            <person name="Williams J.G."/>
            <person name="Dear P.H."/>
            <person name="Noegel A.A."/>
            <person name="Barrell B.G."/>
            <person name="Kuspa A."/>
        </authorList>
    </citation>
    <scope>NUCLEOTIDE SEQUENCE [LARGE SCALE GENOMIC DNA]</scope>
    <source>
        <strain>AX4</strain>
    </source>
</reference>
<gene>
    <name type="ORF">DDB_G0283337</name>
</gene>
<evidence type="ECO:0000255" key="1">
    <source>
        <dbReference type="PROSITE-ProRule" id="PRU00159"/>
    </source>
</evidence>
<evidence type="ECO:0000256" key="2">
    <source>
        <dbReference type="SAM" id="MobiDB-lite"/>
    </source>
</evidence>
<keyword id="KW-0067">ATP-binding</keyword>
<keyword id="KW-0418">Kinase</keyword>
<keyword id="KW-0547">Nucleotide-binding</keyword>
<keyword id="KW-1185">Reference proteome</keyword>
<keyword id="KW-0723">Serine/threonine-protein kinase</keyword>
<keyword id="KW-0808">Transferase</keyword>
<dbReference type="EC" id="2.7.11.1"/>
<dbReference type="EMBL" id="AAFI02000052">
    <property type="protein sequence ID" value="EAL65809.1"/>
    <property type="molecule type" value="Genomic_DNA"/>
</dbReference>
<dbReference type="RefSeq" id="XP_639152.1">
    <property type="nucleotide sequence ID" value="XM_634060.1"/>
</dbReference>
<dbReference type="SMR" id="Q54R95"/>
<dbReference type="PaxDb" id="44689-DDB0231195"/>
<dbReference type="EnsemblProtists" id="EAL65809">
    <property type="protein sequence ID" value="EAL65809"/>
    <property type="gene ID" value="DDB_G0283337"/>
</dbReference>
<dbReference type="GeneID" id="8624022"/>
<dbReference type="KEGG" id="ddi:DDB_G0283337"/>
<dbReference type="dictyBase" id="DDB_G0283337"/>
<dbReference type="VEuPathDB" id="AmoebaDB:DDB_G0283337"/>
<dbReference type="eggNOG" id="KOG0192">
    <property type="taxonomic scope" value="Eukaryota"/>
</dbReference>
<dbReference type="HOGENOM" id="CLU_279453_0_0_1"/>
<dbReference type="InParanoid" id="Q54R95"/>
<dbReference type="OMA" id="NRNKGIN"/>
<dbReference type="PRO" id="PR:Q54R95"/>
<dbReference type="Proteomes" id="UP000002195">
    <property type="component" value="Chromosome 4"/>
</dbReference>
<dbReference type="GO" id="GO:0005737">
    <property type="term" value="C:cytoplasm"/>
    <property type="evidence" value="ECO:0000318"/>
    <property type="project" value="GO_Central"/>
</dbReference>
<dbReference type="GO" id="GO:0005634">
    <property type="term" value="C:nucleus"/>
    <property type="evidence" value="ECO:0000318"/>
    <property type="project" value="GO_Central"/>
</dbReference>
<dbReference type="GO" id="GO:0005524">
    <property type="term" value="F:ATP binding"/>
    <property type="evidence" value="ECO:0007669"/>
    <property type="project" value="UniProtKB-KW"/>
</dbReference>
<dbReference type="GO" id="GO:0106310">
    <property type="term" value="F:protein serine kinase activity"/>
    <property type="evidence" value="ECO:0007669"/>
    <property type="project" value="RHEA"/>
</dbReference>
<dbReference type="GO" id="GO:0004674">
    <property type="term" value="F:protein serine/threonine kinase activity"/>
    <property type="evidence" value="ECO:0000318"/>
    <property type="project" value="GO_Central"/>
</dbReference>
<dbReference type="GO" id="GO:0044773">
    <property type="term" value="P:mitotic DNA damage checkpoint signaling"/>
    <property type="evidence" value="ECO:0000318"/>
    <property type="project" value="GO_Central"/>
</dbReference>
<dbReference type="Gene3D" id="3.30.200.20">
    <property type="entry name" value="Phosphorylase Kinase, domain 1"/>
    <property type="match status" value="1"/>
</dbReference>
<dbReference type="Gene3D" id="1.10.510.10">
    <property type="entry name" value="Transferase(Phosphotransferase) domain 1"/>
    <property type="match status" value="1"/>
</dbReference>
<dbReference type="InterPro" id="IPR011009">
    <property type="entry name" value="Kinase-like_dom_sf"/>
</dbReference>
<dbReference type="InterPro" id="IPR000719">
    <property type="entry name" value="Prot_kinase_dom"/>
</dbReference>
<dbReference type="InterPro" id="IPR017441">
    <property type="entry name" value="Protein_kinase_ATP_BS"/>
</dbReference>
<dbReference type="PANTHER" id="PTHR44167">
    <property type="entry name" value="OVARIAN-SPECIFIC SERINE/THREONINE-PROTEIN KINASE LOK-RELATED"/>
    <property type="match status" value="1"/>
</dbReference>
<dbReference type="PANTHER" id="PTHR44167:SF24">
    <property type="entry name" value="SERINE_THREONINE-PROTEIN KINASE CHK2"/>
    <property type="match status" value="1"/>
</dbReference>
<dbReference type="Pfam" id="PF00069">
    <property type="entry name" value="Pkinase"/>
    <property type="match status" value="1"/>
</dbReference>
<dbReference type="SMART" id="SM00220">
    <property type="entry name" value="S_TKc"/>
    <property type="match status" value="1"/>
</dbReference>
<dbReference type="SUPFAM" id="SSF56112">
    <property type="entry name" value="Protein kinase-like (PK-like)"/>
    <property type="match status" value="1"/>
</dbReference>
<dbReference type="PROSITE" id="PS00107">
    <property type="entry name" value="PROTEIN_KINASE_ATP"/>
    <property type="match status" value="1"/>
</dbReference>
<dbReference type="PROSITE" id="PS50011">
    <property type="entry name" value="PROTEIN_KINASE_DOM"/>
    <property type="match status" value="1"/>
</dbReference>
<feature type="chain" id="PRO_0000362051" description="Probable serine/threonine-protein kinase DDB_G0283337">
    <location>
        <begin position="1"/>
        <end position="1128"/>
    </location>
</feature>
<feature type="domain" description="Protein kinase" evidence="1">
    <location>
        <begin position="777"/>
        <end position="1054"/>
    </location>
</feature>
<feature type="region of interest" description="Disordered" evidence="2">
    <location>
        <begin position="1"/>
        <end position="21"/>
    </location>
</feature>
<feature type="region of interest" description="Disordered" evidence="2">
    <location>
        <begin position="60"/>
        <end position="100"/>
    </location>
</feature>
<feature type="region of interest" description="Disordered" evidence="2">
    <location>
        <begin position="131"/>
        <end position="151"/>
    </location>
</feature>
<feature type="region of interest" description="Disordered" evidence="2">
    <location>
        <begin position="236"/>
        <end position="256"/>
    </location>
</feature>
<feature type="region of interest" description="Disordered" evidence="2">
    <location>
        <begin position="375"/>
        <end position="504"/>
    </location>
</feature>
<feature type="compositionally biased region" description="Low complexity" evidence="2">
    <location>
        <begin position="1"/>
        <end position="17"/>
    </location>
</feature>
<feature type="compositionally biased region" description="Low complexity" evidence="2">
    <location>
        <begin position="243"/>
        <end position="256"/>
    </location>
</feature>
<feature type="compositionally biased region" description="Low complexity" evidence="2">
    <location>
        <begin position="375"/>
        <end position="502"/>
    </location>
</feature>
<feature type="active site" description="Proton acceptor" evidence="1">
    <location>
        <position position="904"/>
    </location>
</feature>
<feature type="binding site" evidence="1">
    <location>
        <begin position="783"/>
        <end position="791"/>
    </location>
    <ligand>
        <name>ATP</name>
        <dbReference type="ChEBI" id="CHEBI:30616"/>
    </ligand>
</feature>
<feature type="binding site" evidence="1">
    <location>
        <position position="809"/>
    </location>
    <ligand>
        <name>ATP</name>
        <dbReference type="ChEBI" id="CHEBI:30616"/>
    </ligand>
</feature>
<name>Y3337_DICDI</name>
<comment type="catalytic activity">
    <reaction>
        <text>L-seryl-[protein] + ATP = O-phospho-L-seryl-[protein] + ADP + H(+)</text>
        <dbReference type="Rhea" id="RHEA:17989"/>
        <dbReference type="Rhea" id="RHEA-COMP:9863"/>
        <dbReference type="Rhea" id="RHEA-COMP:11604"/>
        <dbReference type="ChEBI" id="CHEBI:15378"/>
        <dbReference type="ChEBI" id="CHEBI:29999"/>
        <dbReference type="ChEBI" id="CHEBI:30616"/>
        <dbReference type="ChEBI" id="CHEBI:83421"/>
        <dbReference type="ChEBI" id="CHEBI:456216"/>
        <dbReference type="EC" id="2.7.11.1"/>
    </reaction>
</comment>
<comment type="catalytic activity">
    <reaction>
        <text>L-threonyl-[protein] + ATP = O-phospho-L-threonyl-[protein] + ADP + H(+)</text>
        <dbReference type="Rhea" id="RHEA:46608"/>
        <dbReference type="Rhea" id="RHEA-COMP:11060"/>
        <dbReference type="Rhea" id="RHEA-COMP:11605"/>
        <dbReference type="ChEBI" id="CHEBI:15378"/>
        <dbReference type="ChEBI" id="CHEBI:30013"/>
        <dbReference type="ChEBI" id="CHEBI:30616"/>
        <dbReference type="ChEBI" id="CHEBI:61977"/>
        <dbReference type="ChEBI" id="CHEBI:456216"/>
        <dbReference type="EC" id="2.7.11.1"/>
    </reaction>
</comment>
<comment type="similarity">
    <text evidence="1">Belongs to the protein kinase superfamily. Ser/Thr protein kinase family.</text>
</comment>
<organism>
    <name type="scientific">Dictyostelium discoideum</name>
    <name type="common">Social amoeba</name>
    <dbReference type="NCBI Taxonomy" id="44689"/>
    <lineage>
        <taxon>Eukaryota</taxon>
        <taxon>Amoebozoa</taxon>
        <taxon>Evosea</taxon>
        <taxon>Eumycetozoa</taxon>
        <taxon>Dictyostelia</taxon>
        <taxon>Dictyosteliales</taxon>
        <taxon>Dictyosteliaceae</taxon>
        <taxon>Dictyostelium</taxon>
    </lineage>
</organism>
<proteinExistence type="inferred from homology"/>
<sequence>MENNNNNNINKTNTPNNSFSPIKNRIEHFERMSSSPNISIPLSQKEYYCSPKKNISLNNINHNINYNNNNNNNNNNNNNNNNNNNNNNNNNNNNNNNNNNNCIVGESNIINNNKDDYNSNNNSTINYNIVRESNSNNNSNNSNININNNSNNNFEKEKIIENNKEYINSDFDSISNNDNNNYNNNNIFIFEKIEYNKEEIDCVIAINSDIESNKNDENDDNYKNHNYEIIIVGENNNSKEDCNSSNNSYDNDSNSNSDISTSVNCNSINNNDTIDKNNSTNIIKSIENNNKNNYNKNNNKNNIKSIFENILIKVFTIIDKESSKLIQGLKIENKLKSQLSYLEEDYIYQTVLAILQTKVLQVIFNDVFPNSNIYNDNENNNNNNNNNNNNNNNNNNNNNNINNYIVEESNNNISVIDNNNNSDNNNNNNNNNNNNNNNNNNNNNNNNNNNNNKSNNYIVEESNNNSVIDNNNSVIDNNNNINNNSNNNNNNNNNNNNNNNNSEQNFTYNEKKIQNPIIRCIRNLREIRIKKIPKNIHVDLFQDYRNIQIIHNQFPELFTDSINDCYKIFHHFCLTYSGPDVKQFLCEFSKIGVISCSDENENSSLYYAIENKVNGLQLVCEMVCNGLINIEMAKKTNKHGHSILCKCINLKNIPILKLLISFGFDHFEICQNCKNTDQDIQDIFDDIYFSMAYFSTIPDSVNGKLIKTNIALLTELIYSQEKLKLLFKVANAPVPTEIEKAVNKFIFKMDDYKTKYNLKKNEIESIEKVGIIDKSQLSDFSIIGEGGFSTVHKATYINLQNTITPVAIKSFKNYDDDSFERIYKEVSVHQSLQGENILKLIGVSKLKFGLSIIIEKCDMDLKNFISCNQINLDLFFILSTQMVNSVSQVHNHYPEAEINVYHRDIKLENWLIKTIDGNHTVFISDFGLSRSNTESNGCTLQQIRGTNLHIAPECYKGFLFSSQSDIFSVGISLYQLAYKLVYGKFVHPYHEYQIADEPENLNIIQNTGLIPTIPPNLPSRLKRLLFLMMSKMPERRPSIKECIEEIQKCKEEYESDRTKWDTEISVHEDYSLLNEQMINQYHYIKSDVLDYIRDFDLNQNPHDNYVQELESFDYSSYFIKCKSFNEDR</sequence>